<dbReference type="EMBL" id="AAFW02000169">
    <property type="protein sequence ID" value="EDN59436.1"/>
    <property type="molecule type" value="Genomic_DNA"/>
</dbReference>
<dbReference type="SMR" id="A7A1A3"/>
<dbReference type="HOGENOM" id="CLU_034402_2_0_1"/>
<dbReference type="Proteomes" id="UP000007060">
    <property type="component" value="Unassembled WGS sequence"/>
</dbReference>
<dbReference type="GO" id="GO:0005737">
    <property type="term" value="C:cytoplasm"/>
    <property type="evidence" value="ECO:0000250"/>
    <property type="project" value="UniProtKB"/>
</dbReference>
<dbReference type="GO" id="GO:0005524">
    <property type="term" value="F:ATP binding"/>
    <property type="evidence" value="ECO:0000250"/>
    <property type="project" value="UniProtKB"/>
</dbReference>
<dbReference type="GO" id="GO:0000287">
    <property type="term" value="F:magnesium ion binding"/>
    <property type="evidence" value="ECO:0000250"/>
    <property type="project" value="UniProtKB"/>
</dbReference>
<dbReference type="GO" id="GO:0044183">
    <property type="term" value="F:protein folding chaperone"/>
    <property type="evidence" value="ECO:0000250"/>
    <property type="project" value="UniProtKB"/>
</dbReference>
<dbReference type="GO" id="GO:1905143">
    <property type="term" value="P:eukaryotic translation initiation factor 2 complex assembly"/>
    <property type="evidence" value="ECO:0000250"/>
    <property type="project" value="UniProtKB"/>
</dbReference>
<dbReference type="InterPro" id="IPR009772">
    <property type="entry name" value="CDC123"/>
</dbReference>
<dbReference type="PANTHER" id="PTHR15323:SF6">
    <property type="entry name" value="CELL DIVISION CYCLE PROTEIN 123 HOMOLOG"/>
    <property type="match status" value="1"/>
</dbReference>
<dbReference type="PANTHER" id="PTHR15323">
    <property type="entry name" value="D123 PROTEIN"/>
    <property type="match status" value="1"/>
</dbReference>
<dbReference type="Pfam" id="PF07065">
    <property type="entry name" value="D123"/>
    <property type="match status" value="1"/>
</dbReference>
<dbReference type="PIRSF" id="PIRSF007807">
    <property type="entry name" value="Cdc123"/>
    <property type="match status" value="1"/>
</dbReference>
<feature type="chain" id="PRO_0000350952" description="Translation initiation factor eIF2 assembly protein">
    <location>
        <begin position="1"/>
        <end position="360"/>
    </location>
</feature>
<feature type="binding site" evidence="1">
    <location>
        <position position="124"/>
    </location>
    <ligand>
        <name>ATP</name>
        <dbReference type="ChEBI" id="CHEBI:30616"/>
    </ligand>
</feature>
<feature type="binding site" evidence="1">
    <location>
        <position position="127"/>
    </location>
    <ligand>
        <name>ATP</name>
        <dbReference type="ChEBI" id="CHEBI:30616"/>
    </ligand>
</feature>
<feature type="binding site" evidence="1">
    <location>
        <position position="129"/>
    </location>
    <ligand>
        <name>ATP</name>
        <dbReference type="ChEBI" id="CHEBI:30616"/>
    </ligand>
</feature>
<feature type="binding site" evidence="3">
    <location>
        <position position="131"/>
    </location>
    <ligand>
        <name>ATP</name>
        <dbReference type="ChEBI" id="CHEBI:30616"/>
    </ligand>
</feature>
<feature type="binding site" evidence="3">
    <location>
        <position position="187"/>
    </location>
    <ligand>
        <name>ATP</name>
        <dbReference type="ChEBI" id="CHEBI:30616"/>
    </ligand>
</feature>
<feature type="binding site" evidence="3">
    <location>
        <position position="189"/>
    </location>
    <ligand>
        <name>ATP</name>
        <dbReference type="ChEBI" id="CHEBI:30616"/>
    </ligand>
</feature>
<feature type="binding site" evidence="1">
    <location>
        <position position="190"/>
    </location>
    <ligand>
        <name>ATP</name>
        <dbReference type="ChEBI" id="CHEBI:30616"/>
    </ligand>
</feature>
<feature type="binding site" evidence="1">
    <location>
        <position position="197"/>
    </location>
    <ligand>
        <name>ATP</name>
        <dbReference type="ChEBI" id="CHEBI:30616"/>
    </ligand>
</feature>
<feature type="binding site" evidence="1">
    <location>
        <position position="199"/>
    </location>
    <ligand>
        <name>ATP</name>
        <dbReference type="ChEBI" id="CHEBI:30616"/>
    </ligand>
</feature>
<feature type="binding site" evidence="1">
    <location>
        <position position="213"/>
    </location>
    <ligand>
        <name>ATP</name>
        <dbReference type="ChEBI" id="CHEBI:30616"/>
    </ligand>
</feature>
<feature type="binding site" evidence="3">
    <location>
        <position position="252"/>
    </location>
    <ligand>
        <name>ATP</name>
        <dbReference type="ChEBI" id="CHEBI:30616"/>
    </ligand>
</feature>
<feature type="binding site" evidence="1">
    <location>
        <position position="266"/>
    </location>
    <ligand>
        <name>ATP</name>
        <dbReference type="ChEBI" id="CHEBI:30616"/>
    </ligand>
</feature>
<feature type="binding site" evidence="1">
    <location>
        <position position="266"/>
    </location>
    <ligand>
        <name>Mg(2+)</name>
        <dbReference type="ChEBI" id="CHEBI:18420"/>
    </ligand>
</feature>
<feature type="binding site" evidence="1">
    <location>
        <position position="268"/>
    </location>
    <ligand>
        <name>ATP</name>
        <dbReference type="ChEBI" id="CHEBI:30616"/>
    </ligand>
</feature>
<feature type="binding site" evidence="1">
    <location>
        <position position="268"/>
    </location>
    <ligand>
        <name>Mg(2+)</name>
        <dbReference type="ChEBI" id="CHEBI:18420"/>
    </ligand>
</feature>
<organism>
    <name type="scientific">Saccharomyces cerevisiae (strain YJM789)</name>
    <name type="common">Baker's yeast</name>
    <dbReference type="NCBI Taxonomy" id="307796"/>
    <lineage>
        <taxon>Eukaryota</taxon>
        <taxon>Fungi</taxon>
        <taxon>Dikarya</taxon>
        <taxon>Ascomycota</taxon>
        <taxon>Saccharomycotina</taxon>
        <taxon>Saccharomycetes</taxon>
        <taxon>Saccharomycetales</taxon>
        <taxon>Saccharomycetaceae</taxon>
        <taxon>Saccharomyces</taxon>
    </lineage>
</organism>
<reference key="1">
    <citation type="journal article" date="2007" name="Proc. Natl. Acad. Sci. U.S.A.">
        <title>Genome sequencing and comparative analysis of Saccharomyces cerevisiae strain YJM789.</title>
        <authorList>
            <person name="Wei W."/>
            <person name="McCusker J.H."/>
            <person name="Hyman R.W."/>
            <person name="Jones T."/>
            <person name="Ning Y."/>
            <person name="Cao Z."/>
            <person name="Gu Z."/>
            <person name="Bruno D."/>
            <person name="Miranda M."/>
            <person name="Nguyen M."/>
            <person name="Wilhelmy J."/>
            <person name="Komp C."/>
            <person name="Tamse R."/>
            <person name="Wang X."/>
            <person name="Jia P."/>
            <person name="Luedi P."/>
            <person name="Oefner P.J."/>
            <person name="David L."/>
            <person name="Dietrich F.S."/>
            <person name="Li Y."/>
            <person name="Davis R.W."/>
            <person name="Steinmetz L.M."/>
        </authorList>
    </citation>
    <scope>NUCLEOTIDE SEQUENCE [LARGE SCALE GENOMIC DNA]</scope>
    <source>
        <strain>YJM789</strain>
    </source>
</reference>
<name>CD123_YEAS7</name>
<keyword id="KW-0067">ATP-binding</keyword>
<keyword id="KW-0143">Chaperone</keyword>
<keyword id="KW-0963">Cytoplasm</keyword>
<keyword id="KW-0460">Magnesium</keyword>
<keyword id="KW-0479">Metal-binding</keyword>
<keyword id="KW-0547">Nucleotide-binding</keyword>
<accession>A7A1A3</accession>
<proteinExistence type="inferred from homology"/>
<gene>
    <name type="primary">CDC123</name>
    <name type="ORF">SCY_3781</name>
</gene>
<evidence type="ECO:0000250" key="1">
    <source>
        <dbReference type="UniProtKB" id="O75794"/>
    </source>
</evidence>
<evidence type="ECO:0000250" key="2">
    <source>
        <dbReference type="UniProtKB" id="Q05791"/>
    </source>
</evidence>
<evidence type="ECO:0000250" key="3">
    <source>
        <dbReference type="UniProtKB" id="Q9P7N5"/>
    </source>
</evidence>
<evidence type="ECO:0000305" key="4"/>
<protein>
    <recommendedName>
        <fullName evidence="4">Translation initiation factor eIF2 assembly protein</fullName>
    </recommendedName>
    <alternativeName>
        <fullName>Cell division cycle protein 123</fullName>
    </alternativeName>
</protein>
<comment type="function">
    <text evidence="2">ATP-dependent protein-folding chaperone for the eIF2 complex (By similarity). Binds to the gamma subunit of the eIF2 complex which allows the subunit to assemble with the alpha and beta subunits (By similarity).</text>
</comment>
<comment type="subunit">
    <text evidence="2">Interacts with the eIF2 complex gamma subunit GCD11 (via C-terminus); the interaction is direct and appears to be specific for an unassembled form of GCD11 (By similarity). Interacts with the eIF2 complex alpha subunit SUI2; the interaction is direct (By similarity). Interacts with the eIF2 beta complex subunit SUI3 (By similarity). Interacts with DMA1 (By similarity). Interacts with DMA2 (By similarity).</text>
</comment>
<comment type="subcellular location">
    <subcellularLocation>
        <location evidence="2">Cytoplasm</location>
    </subcellularLocation>
</comment>
<comment type="induction">
    <text evidence="2">Expressed during exponential growth and repressed in stationary phase (at protein level) (By similarity). Levels not affected by the presence of mating pheromone (at protein level) (By similarity).</text>
</comment>
<comment type="similarity">
    <text evidence="4">Belongs to the CDC123 family.</text>
</comment>
<sequence>MSSQEYTTFIDIPVTRAQVEHCSYSFWSSLYPKYVPKSIVLKSLPKKFIQYLEQDGIKLPQEENSRSVYTEEIIRNEDNDYSDWEDDEDTATEFVQEVEPLIDFPELHQKLKDALNELGAVAPKLNWSAPRDATWILPNNTMKCNEVNELYLLLNASNYIMHDLQRAFKGCVDGDDIKGLKFDLVLRQWCDMNPALEFRVFVKNAHIVGATQRDLNYYDYLDELSDTFKDLIDEIVHDVVLPKFPDKSFVLDVYIPRPFNKIFIVDINPFARKTDSLLFSWNEIAAIAPPKNDVEDYELRLVTRHNTGRFASKEHSENHVPQDLVEASLNPEAIRELTQKWKELLSQQAKEESSDSESET</sequence>